<organism>
    <name type="scientific">Saccharomyces cerevisiae (strain ATCC 204508 / S288c)</name>
    <name type="common">Baker's yeast</name>
    <dbReference type="NCBI Taxonomy" id="559292"/>
    <lineage>
        <taxon>Eukaryota</taxon>
        <taxon>Fungi</taxon>
        <taxon>Dikarya</taxon>
        <taxon>Ascomycota</taxon>
        <taxon>Saccharomycotina</taxon>
        <taxon>Saccharomycetes</taxon>
        <taxon>Saccharomycetales</taxon>
        <taxon>Saccharomycetaceae</taxon>
        <taxon>Saccharomyces</taxon>
    </lineage>
</organism>
<dbReference type="EC" id="6.3.2.2" evidence="2"/>
<dbReference type="EMBL" id="D90220">
    <property type="protein sequence ID" value="BAA14251.1"/>
    <property type="molecule type" value="Genomic_DNA"/>
</dbReference>
<dbReference type="EMBL" id="Z17312">
    <property type="protein sequence ID" value="CAA78960.1"/>
    <property type="molecule type" value="Genomic_DNA"/>
</dbReference>
<dbReference type="EMBL" id="X85021">
    <property type="protein sequence ID" value="CAA59393.1"/>
    <property type="molecule type" value="Genomic_DNA"/>
</dbReference>
<dbReference type="EMBL" id="Z49376">
    <property type="protein sequence ID" value="CAA89396.1"/>
    <property type="molecule type" value="Genomic_DNA"/>
</dbReference>
<dbReference type="EMBL" id="BK006943">
    <property type="protein sequence ID" value="DAA08699.1"/>
    <property type="molecule type" value="Genomic_DNA"/>
</dbReference>
<dbReference type="PIR" id="S28648">
    <property type="entry name" value="S28648"/>
</dbReference>
<dbReference type="RefSeq" id="NP_012434.1">
    <property type="nucleotide sequence ID" value="NM_001181534.1"/>
</dbReference>
<dbReference type="PDB" id="3IG5">
    <property type="method" value="X-ray"/>
    <property type="resolution" value="2.10 A"/>
    <property type="chains" value="A=1-678"/>
</dbReference>
<dbReference type="PDB" id="3IG8">
    <property type="method" value="X-ray"/>
    <property type="resolution" value="2.69 A"/>
    <property type="chains" value="A=1-678"/>
</dbReference>
<dbReference type="PDB" id="3LVV">
    <property type="method" value="X-ray"/>
    <property type="resolution" value="2.20 A"/>
    <property type="chains" value="A=1-678"/>
</dbReference>
<dbReference type="PDB" id="3LVW">
    <property type="method" value="X-ray"/>
    <property type="resolution" value="2.50 A"/>
    <property type="chains" value="A=1-678"/>
</dbReference>
<dbReference type="PDBsum" id="3IG5"/>
<dbReference type="PDBsum" id="3IG8"/>
<dbReference type="PDBsum" id="3LVV"/>
<dbReference type="PDBsum" id="3LVW"/>
<dbReference type="SMR" id="P32477"/>
<dbReference type="BioGRID" id="33656">
    <property type="interactions" value="473"/>
</dbReference>
<dbReference type="FunCoup" id="P32477">
    <property type="interactions" value="499"/>
</dbReference>
<dbReference type="IntAct" id="P32477">
    <property type="interactions" value="10"/>
</dbReference>
<dbReference type="STRING" id="4932.YJL101C"/>
<dbReference type="iPTMnet" id="P32477"/>
<dbReference type="PaxDb" id="4932-YJL101C"/>
<dbReference type="PeptideAtlas" id="P32477"/>
<dbReference type="EnsemblFungi" id="YJL101C_mRNA">
    <property type="protein sequence ID" value="YJL101C"/>
    <property type="gene ID" value="YJL101C"/>
</dbReference>
<dbReference type="GeneID" id="853344"/>
<dbReference type="KEGG" id="sce:YJL101C"/>
<dbReference type="AGR" id="SGD:S000003637"/>
<dbReference type="SGD" id="S000003637">
    <property type="gene designation" value="GSH1"/>
</dbReference>
<dbReference type="VEuPathDB" id="FungiDB:YJL101C"/>
<dbReference type="eggNOG" id="KOG3754">
    <property type="taxonomic scope" value="Eukaryota"/>
</dbReference>
<dbReference type="GeneTree" id="ENSGT00390000011908"/>
<dbReference type="HOGENOM" id="CLU_010467_0_0_1"/>
<dbReference type="InParanoid" id="P32477"/>
<dbReference type="OMA" id="IAHMFIR"/>
<dbReference type="OrthoDB" id="7939818at2759"/>
<dbReference type="BioCyc" id="YEAST:YJL101C-MONOMER"/>
<dbReference type="BRENDA" id="6.3.2.2">
    <property type="organism ID" value="984"/>
</dbReference>
<dbReference type="UniPathway" id="UPA00142">
    <property type="reaction ID" value="UER00209"/>
</dbReference>
<dbReference type="BioGRID-ORCS" id="853344">
    <property type="hits" value="10 hits in 10 CRISPR screens"/>
</dbReference>
<dbReference type="EvolutionaryTrace" id="P32477"/>
<dbReference type="PRO" id="PR:P32477"/>
<dbReference type="Proteomes" id="UP000002311">
    <property type="component" value="Chromosome X"/>
</dbReference>
<dbReference type="RNAct" id="P32477">
    <property type="molecule type" value="protein"/>
</dbReference>
<dbReference type="GO" id="GO:0005737">
    <property type="term" value="C:cytoplasm"/>
    <property type="evidence" value="ECO:0000314"/>
    <property type="project" value="SGD"/>
</dbReference>
<dbReference type="GO" id="GO:0005524">
    <property type="term" value="F:ATP binding"/>
    <property type="evidence" value="ECO:0007669"/>
    <property type="project" value="UniProtKB-KW"/>
</dbReference>
<dbReference type="GO" id="GO:0004357">
    <property type="term" value="F:glutamate-cysteine ligase activity"/>
    <property type="evidence" value="ECO:0000314"/>
    <property type="project" value="SGD"/>
</dbReference>
<dbReference type="GO" id="GO:0006750">
    <property type="term" value="P:glutathione biosynthetic process"/>
    <property type="evidence" value="ECO:0000314"/>
    <property type="project" value="SGD"/>
</dbReference>
<dbReference type="GO" id="GO:0046686">
    <property type="term" value="P:response to cadmium ion"/>
    <property type="evidence" value="ECO:0000314"/>
    <property type="project" value="SGD"/>
</dbReference>
<dbReference type="GO" id="GO:0042542">
    <property type="term" value="P:response to hydrogen peroxide"/>
    <property type="evidence" value="ECO:0000315"/>
    <property type="project" value="SGD"/>
</dbReference>
<dbReference type="FunFam" id="1.10.150.710:FF:000001">
    <property type="entry name" value="Glutamate--cysteine ligase"/>
    <property type="match status" value="1"/>
</dbReference>
<dbReference type="FunFam" id="1.10.8.960:FF:000004">
    <property type="entry name" value="Glutamate--cysteine ligase"/>
    <property type="match status" value="1"/>
</dbReference>
<dbReference type="FunFam" id="3.30.590.50:FF:000006">
    <property type="entry name" value="Glutamate--cysteine ligase"/>
    <property type="match status" value="1"/>
</dbReference>
<dbReference type="FunFam" id="3.30.590.50:FF:000004">
    <property type="entry name" value="Glutamate-cysteine ligase Gcs1"/>
    <property type="match status" value="1"/>
</dbReference>
<dbReference type="Gene3D" id="1.10.8.960">
    <property type="match status" value="1"/>
</dbReference>
<dbReference type="Gene3D" id="3.30.590.50">
    <property type="match status" value="2"/>
</dbReference>
<dbReference type="Gene3D" id="1.10.150.710">
    <property type="entry name" value="Glutamate cysteine ligase subdomain"/>
    <property type="match status" value="1"/>
</dbReference>
<dbReference type="InterPro" id="IPR004308">
    <property type="entry name" value="GCS"/>
</dbReference>
<dbReference type="InterPro" id="IPR014746">
    <property type="entry name" value="Gln_synth/guanido_kin_cat_dom"/>
</dbReference>
<dbReference type="PANTHER" id="PTHR11164">
    <property type="entry name" value="GLUTAMATE CYSTEINE LIGASE"/>
    <property type="match status" value="1"/>
</dbReference>
<dbReference type="PANTHER" id="PTHR11164:SF0">
    <property type="entry name" value="GLUTAMATE--CYSTEINE LIGASE CATALYTIC SUBUNIT"/>
    <property type="match status" value="1"/>
</dbReference>
<dbReference type="Pfam" id="PF03074">
    <property type="entry name" value="GCS"/>
    <property type="match status" value="1"/>
</dbReference>
<dbReference type="SUPFAM" id="SSF55931">
    <property type="entry name" value="Glutamine synthetase/guanido kinase"/>
    <property type="match status" value="1"/>
</dbReference>
<feature type="chain" id="PRO_0000192572" description="Glutamate--cysteine ligase">
    <location>
        <begin position="1"/>
        <end position="678"/>
    </location>
</feature>
<feature type="sequence conflict" description="In Ref. 2; CAA78960." evidence="3" ref="2">
    <original>A</original>
    <variation>R</variation>
    <location>
        <position position="299"/>
    </location>
</feature>
<feature type="sequence conflict" description="In Ref. 2; CAA78960." evidence="3" ref="2">
    <original>L</original>
    <variation>V</variation>
    <location>
        <position position="492"/>
    </location>
</feature>
<feature type="sequence conflict" description="In Ref. 2; CAA78960." evidence="3" ref="2">
    <original>IL</original>
    <variation>MV</variation>
    <location>
        <begin position="526"/>
        <end position="527"/>
    </location>
</feature>
<feature type="sequence conflict" description="In Ref. 2; CAA78960." evidence="3" ref="2">
    <original>D</original>
    <variation>V</variation>
    <location>
        <position position="542"/>
    </location>
</feature>
<feature type="sequence conflict" description="In Ref. 2; CAA78960." evidence="3" ref="2">
    <original>I</original>
    <variation>M</variation>
    <location>
        <position position="550"/>
    </location>
</feature>
<feature type="helix" evidence="5">
    <location>
        <begin position="12"/>
        <end position="15"/>
    </location>
</feature>
<feature type="helix" evidence="5">
    <location>
        <begin position="16"/>
        <end position="18"/>
    </location>
</feature>
<feature type="helix" evidence="5">
    <location>
        <begin position="19"/>
        <end position="37"/>
    </location>
</feature>
<feature type="strand" evidence="5">
    <location>
        <begin position="46"/>
        <end position="59"/>
    </location>
</feature>
<feature type="turn" evidence="5">
    <location>
        <begin position="60"/>
        <end position="63"/>
    </location>
</feature>
<feature type="strand" evidence="5">
    <location>
        <begin position="64"/>
        <end position="67"/>
    </location>
</feature>
<feature type="helix" evidence="5">
    <location>
        <begin position="74"/>
        <end position="77"/>
    </location>
</feature>
<feature type="turn" evidence="5">
    <location>
        <begin position="78"/>
        <end position="82"/>
    </location>
</feature>
<feature type="helix" evidence="5">
    <location>
        <begin position="83"/>
        <end position="88"/>
    </location>
</feature>
<feature type="strand" evidence="5">
    <location>
        <begin position="91"/>
        <end position="94"/>
    </location>
</feature>
<feature type="strand" evidence="5">
    <location>
        <begin position="101"/>
        <end position="108"/>
    </location>
</feature>
<feature type="strand" evidence="5">
    <location>
        <begin position="110"/>
        <end position="112"/>
    </location>
</feature>
<feature type="helix" evidence="5">
    <location>
        <begin position="117"/>
        <end position="142"/>
    </location>
</feature>
<feature type="strand" evidence="5">
    <location>
        <begin position="149"/>
        <end position="154"/>
    </location>
</feature>
<feature type="turn" evidence="5">
    <location>
        <begin position="160"/>
        <end position="163"/>
    </location>
</feature>
<feature type="strand" evidence="5">
    <location>
        <begin position="168"/>
        <end position="171"/>
    </location>
</feature>
<feature type="turn" evidence="5">
    <location>
        <begin position="179"/>
        <end position="181"/>
    </location>
</feature>
<feature type="helix" evidence="5">
    <location>
        <begin position="188"/>
        <end position="190"/>
    </location>
</feature>
<feature type="helix" evidence="5">
    <location>
        <begin position="196"/>
        <end position="208"/>
    </location>
</feature>
<feature type="strand" evidence="5">
    <location>
        <begin position="214"/>
        <end position="218"/>
    </location>
</feature>
<feature type="helix" evidence="5">
    <location>
        <begin position="240"/>
        <end position="242"/>
    </location>
</feature>
<feature type="helix" evidence="5">
    <location>
        <begin position="244"/>
        <end position="247"/>
    </location>
</feature>
<feature type="strand" evidence="5">
    <location>
        <begin position="252"/>
        <end position="255"/>
    </location>
</feature>
<feature type="helix" evidence="5">
    <location>
        <begin position="259"/>
        <end position="262"/>
    </location>
</feature>
<feature type="strand" evidence="5">
    <location>
        <begin position="266"/>
        <end position="275"/>
    </location>
</feature>
<feature type="helix" evidence="5">
    <location>
        <begin position="276"/>
        <end position="286"/>
    </location>
</feature>
<feature type="helix" evidence="5">
    <location>
        <begin position="289"/>
        <end position="296"/>
    </location>
</feature>
<feature type="strand" evidence="5">
    <location>
        <begin position="306"/>
        <end position="310"/>
    </location>
</feature>
<feature type="helix" evidence="5">
    <location>
        <begin position="314"/>
        <end position="320"/>
    </location>
</feature>
<feature type="turn" evidence="5">
    <location>
        <begin position="326"/>
        <end position="330"/>
    </location>
</feature>
<feature type="turn" evidence="5">
    <location>
        <begin position="336"/>
        <end position="338"/>
    </location>
</feature>
<feature type="helix" evidence="5">
    <location>
        <begin position="340"/>
        <end position="342"/>
    </location>
</feature>
<feature type="helix" evidence="5">
    <location>
        <begin position="348"/>
        <end position="353"/>
    </location>
</feature>
<feature type="strand" evidence="5">
    <location>
        <begin position="361"/>
        <end position="364"/>
    </location>
</feature>
<feature type="helix" evidence="5">
    <location>
        <begin position="377"/>
        <end position="379"/>
    </location>
</feature>
<feature type="helix" evidence="5">
    <location>
        <begin position="388"/>
        <end position="395"/>
    </location>
</feature>
<feature type="helix" evidence="5">
    <location>
        <begin position="404"/>
        <end position="413"/>
    </location>
</feature>
<feature type="helix" evidence="5">
    <location>
        <begin position="423"/>
        <end position="425"/>
    </location>
</feature>
<feature type="turn" evidence="5">
    <location>
        <begin position="430"/>
        <end position="432"/>
    </location>
</feature>
<feature type="helix" evidence="5">
    <location>
        <begin position="435"/>
        <end position="441"/>
    </location>
</feature>
<feature type="strand" evidence="5">
    <location>
        <begin position="447"/>
        <end position="451"/>
    </location>
</feature>
<feature type="strand" evidence="5">
    <location>
        <begin position="467"/>
        <end position="471"/>
    </location>
</feature>
<feature type="helix" evidence="5">
    <location>
        <begin position="480"/>
        <end position="499"/>
    </location>
</feature>
<feature type="turn" evidence="5">
    <location>
        <begin position="500"/>
        <end position="503"/>
    </location>
</feature>
<feature type="helix" evidence="5">
    <location>
        <begin position="510"/>
        <end position="519"/>
    </location>
</feature>
<feature type="helix" evidence="5">
    <location>
        <begin position="525"/>
        <end position="528"/>
    </location>
</feature>
<feature type="strand" evidence="5">
    <location>
        <begin position="530"/>
        <end position="535"/>
    </location>
</feature>
<feature type="strand" evidence="6">
    <location>
        <begin position="537"/>
        <end position="539"/>
    </location>
</feature>
<feature type="strand" evidence="5">
    <location>
        <begin position="545"/>
        <end position="549"/>
    </location>
</feature>
<feature type="helix" evidence="5">
    <location>
        <begin position="550"/>
        <end position="555"/>
    </location>
</feature>
<feature type="turn" evidence="5">
    <location>
        <begin position="557"/>
        <end position="559"/>
    </location>
</feature>
<feature type="helix" evidence="5">
    <location>
        <begin position="561"/>
        <end position="564"/>
    </location>
</feature>
<feature type="helix" evidence="5">
    <location>
        <begin position="566"/>
        <end position="572"/>
    </location>
</feature>
<feature type="helix" evidence="5">
    <location>
        <begin position="580"/>
        <end position="585"/>
    </location>
</feature>
<feature type="turn" evidence="6">
    <location>
        <begin position="587"/>
        <end position="589"/>
    </location>
</feature>
<feature type="helix" evidence="5">
    <location>
        <begin position="590"/>
        <end position="603"/>
    </location>
</feature>
<feature type="helix" evidence="5">
    <location>
        <begin position="610"/>
        <end position="619"/>
    </location>
</feature>
<feature type="strand" evidence="5">
    <location>
        <begin position="626"/>
        <end position="629"/>
    </location>
</feature>
<feature type="helix" evidence="5">
    <location>
        <begin position="632"/>
        <end position="646"/>
    </location>
</feature>
<feature type="helix" evidence="6">
    <location>
        <begin position="650"/>
        <end position="652"/>
    </location>
</feature>
<feature type="helix" evidence="5">
    <location>
        <begin position="654"/>
        <end position="669"/>
    </location>
</feature>
<reference key="1">
    <citation type="journal article" date="1991" name="Yeast">
        <title>Molecular cloning of the gamma-glutamylcysteine synthetase gene of Saccharomyces cerevisiae.</title>
        <authorList>
            <person name="Ohtake Y."/>
            <person name="Yabuuchi S."/>
        </authorList>
    </citation>
    <scope>NUCLEOTIDE SEQUENCE [GENOMIC DNA]</scope>
    <scope>FUNCTION</scope>
    <scope>CATALYTIC ACTIVITY</scope>
</reference>
<reference key="2">
    <citation type="journal article" date="1993" name="Curr. Genet.">
        <title>A high copy number of yeast gamma-glutamylcysteine synthetase suppresses a nuclear mutation affecting mitochondrial translation.</title>
        <authorList>
            <person name="Lisowsky T."/>
        </authorList>
    </citation>
    <scope>NUCLEOTIDE SEQUENCE [GENOMIC DNA]</scope>
</reference>
<reference key="3">
    <citation type="journal article" date="1995" name="Yeast">
        <title>A 37.5 kb region of yeast chromosome X includes the SME1, MEF2, GSH1 and CSD3 genes, a TCP-1-related gene, an open reading frame similar to the DAL80 gene, and a tRNA(Arg).</title>
        <authorList>
            <person name="Rasmussen S.W."/>
        </authorList>
    </citation>
    <scope>NUCLEOTIDE SEQUENCE [GENOMIC DNA]</scope>
    <source>
        <strain>ATCC 96604 / S288c / FY1679</strain>
    </source>
</reference>
<reference key="4">
    <citation type="journal article" date="1996" name="EMBO J.">
        <title>Complete nucleotide sequence of Saccharomyces cerevisiae chromosome X.</title>
        <authorList>
            <person name="Galibert F."/>
            <person name="Alexandraki D."/>
            <person name="Baur A."/>
            <person name="Boles E."/>
            <person name="Chalwatzis N."/>
            <person name="Chuat J.-C."/>
            <person name="Coster F."/>
            <person name="Cziepluch C."/>
            <person name="de Haan M."/>
            <person name="Domdey H."/>
            <person name="Durand P."/>
            <person name="Entian K.-D."/>
            <person name="Gatius M."/>
            <person name="Goffeau A."/>
            <person name="Grivell L.A."/>
            <person name="Hennemann A."/>
            <person name="Herbert C.J."/>
            <person name="Heumann K."/>
            <person name="Hilger F."/>
            <person name="Hollenberg C.P."/>
            <person name="Huang M.-E."/>
            <person name="Jacq C."/>
            <person name="Jauniaux J.-C."/>
            <person name="Katsoulou C."/>
            <person name="Kirchrath L."/>
            <person name="Kleine K."/>
            <person name="Kordes E."/>
            <person name="Koetter P."/>
            <person name="Liebl S."/>
            <person name="Louis E.J."/>
            <person name="Manus V."/>
            <person name="Mewes H.-W."/>
            <person name="Miosga T."/>
            <person name="Obermaier B."/>
            <person name="Perea J."/>
            <person name="Pohl T.M."/>
            <person name="Portetelle D."/>
            <person name="Pujol A."/>
            <person name="Purnelle B."/>
            <person name="Ramezani Rad M."/>
            <person name="Rasmussen S.W."/>
            <person name="Rose M."/>
            <person name="Rossau R."/>
            <person name="Schaaff-Gerstenschlaeger I."/>
            <person name="Smits P.H.M."/>
            <person name="Scarcez T."/>
            <person name="Soriano N."/>
            <person name="To Van D."/>
            <person name="Tzermia M."/>
            <person name="Van Broekhoven A."/>
            <person name="Vandenbol M."/>
            <person name="Wedler H."/>
            <person name="von Wettstein D."/>
            <person name="Wambutt R."/>
            <person name="Zagulski M."/>
            <person name="Zollner A."/>
            <person name="Karpfinger-Hartl L."/>
        </authorList>
    </citation>
    <scope>NUCLEOTIDE SEQUENCE [LARGE SCALE GENOMIC DNA]</scope>
    <source>
        <strain>ATCC 204508 / S288c</strain>
    </source>
</reference>
<reference key="5">
    <citation type="journal article" date="2014" name="G3 (Bethesda)">
        <title>The reference genome sequence of Saccharomyces cerevisiae: Then and now.</title>
        <authorList>
            <person name="Engel S.R."/>
            <person name="Dietrich F.S."/>
            <person name="Fisk D.G."/>
            <person name="Binkley G."/>
            <person name="Balakrishnan R."/>
            <person name="Costanzo M.C."/>
            <person name="Dwight S.S."/>
            <person name="Hitz B.C."/>
            <person name="Karra K."/>
            <person name="Nash R.S."/>
            <person name="Weng S."/>
            <person name="Wong E.D."/>
            <person name="Lloyd P."/>
            <person name="Skrzypek M.S."/>
            <person name="Miyasato S.R."/>
            <person name="Simison M."/>
            <person name="Cherry J.M."/>
        </authorList>
    </citation>
    <scope>GENOME REANNOTATION</scope>
    <source>
        <strain>ATCC 204508 / S288c</strain>
    </source>
</reference>
<reference key="6">
    <citation type="journal article" date="2003" name="Nature">
        <title>Global analysis of protein expression in yeast.</title>
        <authorList>
            <person name="Ghaemmaghami S."/>
            <person name="Huh W.-K."/>
            <person name="Bower K."/>
            <person name="Howson R.W."/>
            <person name="Belle A."/>
            <person name="Dephoure N."/>
            <person name="O'Shea E.K."/>
            <person name="Weissman J.S."/>
        </authorList>
    </citation>
    <scope>LEVEL OF PROTEIN EXPRESSION [LARGE SCALE ANALYSIS]</scope>
</reference>
<evidence type="ECO:0000269" key="1">
    <source>
    </source>
</evidence>
<evidence type="ECO:0000269" key="2">
    <source>
    </source>
</evidence>
<evidence type="ECO:0000305" key="3"/>
<evidence type="ECO:0000305" key="4">
    <source>
    </source>
</evidence>
<evidence type="ECO:0007829" key="5">
    <source>
        <dbReference type="PDB" id="3IG5"/>
    </source>
</evidence>
<evidence type="ECO:0007829" key="6">
    <source>
        <dbReference type="PDB" id="3LVV"/>
    </source>
</evidence>
<protein>
    <recommendedName>
        <fullName>Glutamate--cysteine ligase</fullName>
        <ecNumber evidence="2">6.3.2.2</ecNumber>
    </recommendedName>
    <alternativeName>
        <fullName>Gamma-ECS</fullName>
        <shortName>GCS</shortName>
    </alternativeName>
    <alternativeName>
        <fullName>Gamma-glutamylcysteine synthetase</fullName>
    </alternativeName>
</protein>
<gene>
    <name type="primary">GSH1</name>
    <name type="ordered locus">YJL101C</name>
    <name type="ORF">J0832</name>
</gene>
<keyword id="KW-0002">3D-structure</keyword>
<keyword id="KW-0067">ATP-binding</keyword>
<keyword id="KW-0317">Glutathione biosynthesis</keyword>
<keyword id="KW-0436">Ligase</keyword>
<keyword id="KW-0547">Nucleotide-binding</keyword>
<keyword id="KW-1185">Reference proteome</keyword>
<accession>P32477</accession>
<accession>D6VW83</accession>
<sequence length="678" mass="78254">MGLLALGTPLQWFESRTYNEHIRDEGIEQLLYIFQAAGKRDNDPLFWGDELEYMVVDFDDKERNSMLDVCHDKILTELNMEDSSLCEANDVSFHPEYGRYMLEATPASPYLNYVGSYVEVNMQKRRAIAEYKLSEYARQDSKNNLHVGSRSVPLTLTVFPRMGCPDFINIKDPWNHKNAASRSLFLPDEVINRHVRFPNLTASIRTRRGEKVCMNVPMYKDIATPETDDSIYDRDWFLPEDKEAKLASKPGFIYMDSMGFGMGCSCLQVTFQAPNINKARYLYDALVNFAPIMLAFSAAAPAFKGWLADQDVRWNVISGAVDDRTPKERGVAPLLPKYNKNGFGGIAKDVQDKVLEIPKSRYSSVDLFLGGSKFFNRTYNDTNVPINEKVLGRLLENDKAPLDYDLAKHFAHLYIRDPVSTFEELLNQDNKTSSNHFENIQSTNWQTLRFKPPTQQATPDKKDSPGWRVEFRPFEVQLLDFENAAYSVLIYLIVDSILTFSDNINAYIHMSKVWENMKIAHHRDAILFEKFHWKKSFRNDTDVETEDYSISEIFHNPENGIFPQFVTPILCQKGFVTKDWKELKHSSKHERLYYYLKLISDRASGELPTTAKFFRNFVLQHPDYKHDSKISKSINYDLLSTCDRLTHLDDSKGELTSFLGAEIAEYVKKNKPSIESKC</sequence>
<proteinExistence type="evidence at protein level"/>
<name>GSH1_YEAST</name>
<comment type="function">
    <text evidence="4">Catalyzes the ATP-dependent condensation of cysteine and glutamate to form the dipeptide gamma-glutamylcysteine (gamma-GC), the first and rate-limiting step in the production of glutathione (GSH).</text>
</comment>
<comment type="catalytic activity">
    <reaction evidence="2">
        <text>L-cysteine + L-glutamate + ATP = gamma-L-glutamyl-L-cysteine + ADP + phosphate + H(+)</text>
        <dbReference type="Rhea" id="RHEA:13285"/>
        <dbReference type="ChEBI" id="CHEBI:15378"/>
        <dbReference type="ChEBI" id="CHEBI:29985"/>
        <dbReference type="ChEBI" id="CHEBI:30616"/>
        <dbReference type="ChEBI" id="CHEBI:35235"/>
        <dbReference type="ChEBI" id="CHEBI:43474"/>
        <dbReference type="ChEBI" id="CHEBI:58173"/>
        <dbReference type="ChEBI" id="CHEBI:456216"/>
        <dbReference type="EC" id="6.3.2.2"/>
    </reaction>
    <physiologicalReaction direction="left-to-right" evidence="2">
        <dbReference type="Rhea" id="RHEA:13286"/>
    </physiologicalReaction>
</comment>
<comment type="activity regulation">
    <text>Feedback inhibition by glutathione.</text>
</comment>
<comment type="pathway">
    <text evidence="4">Sulfur metabolism; glutathione biosynthesis; glutathione from L-cysteine and L-glutamate: step 1/2.</text>
</comment>
<comment type="miscellaneous">
    <text evidence="1">Present with 5130 molecules/cell in log phase SD medium.</text>
</comment>
<comment type="similarity">
    <text evidence="3">Belongs to the glutamate--cysteine ligase type 3 family.</text>
</comment>